<accession>B4MYI5</accession>
<name>BOP1_DROWI</name>
<sequence length="778" mass="89722">MAKKQDRKRKVKDEATNDGASGSDQSDNAEEEEDLLQTVKEPGEDSTDDEGIDQEYQSDSSEDLEFESDEEGNYVGRKGGQQESSDEEEVDEEEEDDDDDDDEEEGGKVEDKPTTSSKAETNNEVAPLPALPARDPSKQEYEDSDTSDEEDIRNTVGNIPMHWYDEYKHIGYDWDGNKIIKPIKGDQIDDFLRKIEDPDFWRTVKDPQTGQEVVLSDADIALIKRINSARIPNAEHEEYEPWIEWFTSEVEKMPIKNVPDHKRSFLPSVSEKKRVSRMVHALKMGWMKTTEEVEREKQQKRGPKFYMLWETDTGREQMRRIHDPVSAPKRDLPGHAESYNPPPEYLFDEKETKQWLKLKDEPHKRKLHFMPQKFKSLREVPAYSRYLRERFLRCLDLYLCPRAKRVKLNIDAEYLIPKLPSPRDLQPFPTVESLVYRGHTDLVRSVSVEPKGEYMVSGSDDKTVKIWEIATGRCIRTIETEDVVRCVAWCPNAKLSIIAVATGSRLLLVNPKVGDKLLIKKTDDLLAEEPSNQDIIDNERIKTAVQWSTAEAAEQEKGVRVIINHFKPIRQVTWHGRGDYLATVMPEGANRSALIHQLSKRRSQIPFSKSKGLIQCVLFHPVKPCFFVATQHNIRIYDLVKQELIKKLLTNSKWISGMSIHPKGDNLLVSTYDKKMLWFDLDLSTKPYQTMRLHRNAVRSVAFHLRYPLFASGSDDQAVIVSHGMVYNDLLQNPLIVPLKKLQTHEKRDDFGVLDVCWHPVQPWVFSTGADCTIRLYT</sequence>
<organism>
    <name type="scientific">Drosophila willistoni</name>
    <name type="common">Fruit fly</name>
    <dbReference type="NCBI Taxonomy" id="7260"/>
    <lineage>
        <taxon>Eukaryota</taxon>
        <taxon>Metazoa</taxon>
        <taxon>Ecdysozoa</taxon>
        <taxon>Arthropoda</taxon>
        <taxon>Hexapoda</taxon>
        <taxon>Insecta</taxon>
        <taxon>Pterygota</taxon>
        <taxon>Neoptera</taxon>
        <taxon>Endopterygota</taxon>
        <taxon>Diptera</taxon>
        <taxon>Brachycera</taxon>
        <taxon>Muscomorpha</taxon>
        <taxon>Ephydroidea</taxon>
        <taxon>Drosophilidae</taxon>
        <taxon>Drosophila</taxon>
        <taxon>Sophophora</taxon>
    </lineage>
</organism>
<keyword id="KW-0539">Nucleus</keyword>
<keyword id="KW-1185">Reference proteome</keyword>
<keyword id="KW-0677">Repeat</keyword>
<keyword id="KW-0690">Ribosome biogenesis</keyword>
<keyword id="KW-0698">rRNA processing</keyword>
<keyword id="KW-0853">WD repeat</keyword>
<dbReference type="EMBL" id="CH963894">
    <property type="protein sequence ID" value="EDW77174.1"/>
    <property type="molecule type" value="Genomic_DNA"/>
</dbReference>
<dbReference type="SMR" id="B4MYI5"/>
<dbReference type="STRING" id="7260.B4MYI5"/>
<dbReference type="EnsemblMetazoa" id="FBtr0252878">
    <property type="protein sequence ID" value="FBpp0251370"/>
    <property type="gene ID" value="FBgn0224212"/>
</dbReference>
<dbReference type="EnsemblMetazoa" id="XM_002066152.4">
    <property type="protein sequence ID" value="XP_002066188.1"/>
    <property type="gene ID" value="LOC6643324"/>
</dbReference>
<dbReference type="GeneID" id="6643324"/>
<dbReference type="KEGG" id="dwi:6643324"/>
<dbReference type="eggNOG" id="KOG0650">
    <property type="taxonomic scope" value="Eukaryota"/>
</dbReference>
<dbReference type="HOGENOM" id="CLU_011390_1_0_1"/>
<dbReference type="OMA" id="MRPAKGE"/>
<dbReference type="OrthoDB" id="5571054at2759"/>
<dbReference type="PhylomeDB" id="B4MYI5"/>
<dbReference type="Proteomes" id="UP000007798">
    <property type="component" value="Unassembled WGS sequence"/>
</dbReference>
<dbReference type="GO" id="GO:0005654">
    <property type="term" value="C:nucleoplasm"/>
    <property type="evidence" value="ECO:0007669"/>
    <property type="project" value="UniProtKB-SubCell"/>
</dbReference>
<dbReference type="GO" id="GO:0070545">
    <property type="term" value="C:PeBoW complex"/>
    <property type="evidence" value="ECO:0007669"/>
    <property type="project" value="TreeGrafter"/>
</dbReference>
<dbReference type="GO" id="GO:0030687">
    <property type="term" value="C:preribosome, large subunit precursor"/>
    <property type="evidence" value="ECO:0007669"/>
    <property type="project" value="UniProtKB-UniRule"/>
</dbReference>
<dbReference type="GO" id="GO:0043021">
    <property type="term" value="F:ribonucleoprotein complex binding"/>
    <property type="evidence" value="ECO:0007669"/>
    <property type="project" value="UniProtKB-UniRule"/>
</dbReference>
<dbReference type="GO" id="GO:0000466">
    <property type="term" value="P:maturation of 5.8S rRNA from tricistronic rRNA transcript (SSU-rRNA, 5.8S rRNA, LSU-rRNA)"/>
    <property type="evidence" value="ECO:0007669"/>
    <property type="project" value="UniProtKB-UniRule"/>
</dbReference>
<dbReference type="GO" id="GO:0000463">
    <property type="term" value="P:maturation of LSU-rRNA from tricistronic rRNA transcript (SSU-rRNA, 5.8S rRNA, LSU-rRNA)"/>
    <property type="evidence" value="ECO:0007669"/>
    <property type="project" value="UniProtKB-UniRule"/>
</dbReference>
<dbReference type="GO" id="GO:0035206">
    <property type="term" value="P:regulation of hemocyte proliferation"/>
    <property type="evidence" value="ECO:0007669"/>
    <property type="project" value="EnsemblMetazoa"/>
</dbReference>
<dbReference type="CDD" id="cd00200">
    <property type="entry name" value="WD40"/>
    <property type="match status" value="1"/>
</dbReference>
<dbReference type="FunFam" id="2.130.10.10:FF:000061">
    <property type="entry name" value="Ribosome biogenesis protein BOP1 homolog"/>
    <property type="match status" value="1"/>
</dbReference>
<dbReference type="Gene3D" id="2.130.10.10">
    <property type="entry name" value="YVTN repeat-like/Quinoprotein amine dehydrogenase"/>
    <property type="match status" value="1"/>
</dbReference>
<dbReference type="HAMAP" id="MF_03027">
    <property type="entry name" value="BOP1"/>
    <property type="match status" value="1"/>
</dbReference>
<dbReference type="InterPro" id="IPR028598">
    <property type="entry name" value="BOP1/Erb1"/>
</dbReference>
<dbReference type="InterPro" id="IPR012953">
    <property type="entry name" value="BOP1_N_dom"/>
</dbReference>
<dbReference type="InterPro" id="IPR015943">
    <property type="entry name" value="WD40/YVTN_repeat-like_dom_sf"/>
</dbReference>
<dbReference type="InterPro" id="IPR019775">
    <property type="entry name" value="WD40_repeat_CS"/>
</dbReference>
<dbReference type="InterPro" id="IPR036322">
    <property type="entry name" value="WD40_repeat_dom_sf"/>
</dbReference>
<dbReference type="InterPro" id="IPR001680">
    <property type="entry name" value="WD40_rpt"/>
</dbReference>
<dbReference type="PANTHER" id="PTHR17605:SF0">
    <property type="entry name" value="RIBOSOME BIOGENESIS PROTEIN BOP1"/>
    <property type="match status" value="1"/>
</dbReference>
<dbReference type="PANTHER" id="PTHR17605">
    <property type="entry name" value="RIBOSOME BIOGENESIS PROTEIN BOP1 BLOCK OF PROLIFERATION 1 PROTEIN"/>
    <property type="match status" value="1"/>
</dbReference>
<dbReference type="Pfam" id="PF08145">
    <property type="entry name" value="BOP1NT"/>
    <property type="match status" value="1"/>
</dbReference>
<dbReference type="Pfam" id="PF00400">
    <property type="entry name" value="WD40"/>
    <property type="match status" value="3"/>
</dbReference>
<dbReference type="SMART" id="SM01035">
    <property type="entry name" value="BOP1NT"/>
    <property type="match status" value="1"/>
</dbReference>
<dbReference type="SMART" id="SM00320">
    <property type="entry name" value="WD40"/>
    <property type="match status" value="7"/>
</dbReference>
<dbReference type="SUPFAM" id="SSF50978">
    <property type="entry name" value="WD40 repeat-like"/>
    <property type="match status" value="1"/>
</dbReference>
<dbReference type="PROSITE" id="PS00678">
    <property type="entry name" value="WD_REPEATS_1"/>
    <property type="match status" value="1"/>
</dbReference>
<dbReference type="PROSITE" id="PS50082">
    <property type="entry name" value="WD_REPEATS_2"/>
    <property type="match status" value="1"/>
</dbReference>
<dbReference type="PROSITE" id="PS50294">
    <property type="entry name" value="WD_REPEATS_REGION"/>
    <property type="match status" value="2"/>
</dbReference>
<evidence type="ECO:0000255" key="1">
    <source>
        <dbReference type="HAMAP-Rule" id="MF_03027"/>
    </source>
</evidence>
<evidence type="ECO:0000256" key="2">
    <source>
        <dbReference type="SAM" id="MobiDB-lite"/>
    </source>
</evidence>
<proteinExistence type="inferred from homology"/>
<comment type="function">
    <text evidence="1">Required for maturation of ribosomal RNAs and formation of the large ribosomal subunit.</text>
</comment>
<comment type="subcellular location">
    <subcellularLocation>
        <location evidence="1">Nucleus</location>
        <location evidence="1">Nucleolus</location>
    </subcellularLocation>
    <subcellularLocation>
        <location evidence="1">Nucleus</location>
        <location evidence="1">Nucleoplasm</location>
    </subcellularLocation>
</comment>
<comment type="similarity">
    <text evidence="1">Belongs to the WD repeat BOP1/ERB1 family.</text>
</comment>
<reference key="1">
    <citation type="journal article" date="2007" name="Nature">
        <title>Evolution of genes and genomes on the Drosophila phylogeny.</title>
        <authorList>
            <consortium name="Drosophila 12 genomes consortium"/>
        </authorList>
    </citation>
    <scope>NUCLEOTIDE SEQUENCE [LARGE SCALE GENOMIC DNA]</scope>
    <source>
        <strain>Tucson 14030-0811.24</strain>
    </source>
</reference>
<feature type="chain" id="PRO_0000370403" description="Ribosome biogenesis protein BOP1 homolog">
    <location>
        <begin position="1"/>
        <end position="778"/>
    </location>
</feature>
<feature type="repeat" description="WD 1">
    <location>
        <begin position="438"/>
        <end position="479"/>
    </location>
</feature>
<feature type="repeat" description="WD 2">
    <location>
        <begin position="481"/>
        <end position="519"/>
    </location>
</feature>
<feature type="repeat" description="WD 3">
    <location>
        <begin position="564"/>
        <end position="606"/>
    </location>
</feature>
<feature type="repeat" description="WD 4">
    <location>
        <begin position="609"/>
        <end position="647"/>
    </location>
</feature>
<feature type="repeat" description="WD 5">
    <location>
        <begin position="650"/>
        <end position="689"/>
    </location>
</feature>
<feature type="repeat" description="WD 6">
    <location>
        <begin position="693"/>
        <end position="732"/>
    </location>
</feature>
<feature type="repeat" description="WD 7">
    <location>
        <begin position="748"/>
        <end position="778"/>
    </location>
</feature>
<feature type="region of interest" description="Disordered" evidence="2">
    <location>
        <begin position="1"/>
        <end position="152"/>
    </location>
</feature>
<feature type="compositionally biased region" description="Basic residues" evidence="2">
    <location>
        <begin position="1"/>
        <end position="10"/>
    </location>
</feature>
<feature type="compositionally biased region" description="Acidic residues" evidence="2">
    <location>
        <begin position="44"/>
        <end position="53"/>
    </location>
</feature>
<feature type="compositionally biased region" description="Acidic residues" evidence="2">
    <location>
        <begin position="60"/>
        <end position="72"/>
    </location>
</feature>
<feature type="compositionally biased region" description="Acidic residues" evidence="2">
    <location>
        <begin position="84"/>
        <end position="105"/>
    </location>
</feature>
<feature type="compositionally biased region" description="Polar residues" evidence="2">
    <location>
        <begin position="114"/>
        <end position="124"/>
    </location>
</feature>
<feature type="compositionally biased region" description="Acidic residues" evidence="2">
    <location>
        <begin position="142"/>
        <end position="151"/>
    </location>
</feature>
<protein>
    <recommendedName>
        <fullName evidence="1">Ribosome biogenesis protein BOP1 homolog</fullName>
    </recommendedName>
</protein>
<gene>
    <name type="ORF">GK22227</name>
</gene>